<protein>
    <recommendedName>
        <fullName evidence="1">Flap endonuclease Xni</fullName>
        <shortName evidence="1">FEN</shortName>
        <ecNumber evidence="1">3.1.-.-</ecNumber>
    </recommendedName>
</protein>
<evidence type="ECO:0000255" key="1">
    <source>
        <dbReference type="HAMAP-Rule" id="MF_01192"/>
    </source>
</evidence>
<dbReference type="EC" id="3.1.-.-" evidence="1"/>
<dbReference type="EMBL" id="AE016795">
    <property type="protein sequence ID" value="AAO08834.1"/>
    <property type="molecule type" value="Genomic_DNA"/>
</dbReference>
<dbReference type="RefSeq" id="WP_011078409.1">
    <property type="nucleotide sequence ID" value="NC_004459.3"/>
</dbReference>
<dbReference type="SMR" id="Q8DFB4"/>
<dbReference type="KEGG" id="vvu:VV1_0301"/>
<dbReference type="HOGENOM" id="CLU_004675_1_2_6"/>
<dbReference type="Proteomes" id="UP000002275">
    <property type="component" value="Chromosome 1"/>
</dbReference>
<dbReference type="GO" id="GO:0008409">
    <property type="term" value="F:5'-3' exonuclease activity"/>
    <property type="evidence" value="ECO:0007669"/>
    <property type="project" value="InterPro"/>
</dbReference>
<dbReference type="GO" id="GO:0017108">
    <property type="term" value="F:5'-flap endonuclease activity"/>
    <property type="evidence" value="ECO:0007669"/>
    <property type="project" value="UniProtKB-UniRule"/>
</dbReference>
<dbReference type="GO" id="GO:0003677">
    <property type="term" value="F:DNA binding"/>
    <property type="evidence" value="ECO:0007669"/>
    <property type="project" value="UniProtKB-UniRule"/>
</dbReference>
<dbReference type="GO" id="GO:0000287">
    <property type="term" value="F:magnesium ion binding"/>
    <property type="evidence" value="ECO:0007669"/>
    <property type="project" value="UniProtKB-UniRule"/>
</dbReference>
<dbReference type="GO" id="GO:0030955">
    <property type="term" value="F:potassium ion binding"/>
    <property type="evidence" value="ECO:0007669"/>
    <property type="project" value="UniProtKB-UniRule"/>
</dbReference>
<dbReference type="GO" id="GO:0033567">
    <property type="term" value="P:DNA replication, Okazaki fragment processing"/>
    <property type="evidence" value="ECO:0007669"/>
    <property type="project" value="UniProtKB-UniRule"/>
</dbReference>
<dbReference type="CDD" id="cd09898">
    <property type="entry name" value="H3TH_53EXO"/>
    <property type="match status" value="1"/>
</dbReference>
<dbReference type="CDD" id="cd09859">
    <property type="entry name" value="PIN_53EXO"/>
    <property type="match status" value="1"/>
</dbReference>
<dbReference type="FunFam" id="1.10.150.20:FF:000003">
    <property type="entry name" value="DNA polymerase I"/>
    <property type="match status" value="1"/>
</dbReference>
<dbReference type="Gene3D" id="1.10.150.20">
    <property type="entry name" value="5' to 3' exonuclease, C-terminal subdomain"/>
    <property type="match status" value="1"/>
</dbReference>
<dbReference type="Gene3D" id="3.40.50.1010">
    <property type="entry name" value="5'-nuclease"/>
    <property type="match status" value="1"/>
</dbReference>
<dbReference type="HAMAP" id="MF_01192">
    <property type="entry name" value="Xni"/>
    <property type="match status" value="1"/>
</dbReference>
<dbReference type="InterPro" id="IPR020046">
    <property type="entry name" value="5-3_exonucl_a-hlix_arch_N"/>
</dbReference>
<dbReference type="InterPro" id="IPR002421">
    <property type="entry name" value="5-3_exonuclease"/>
</dbReference>
<dbReference type="InterPro" id="IPR036279">
    <property type="entry name" value="5-3_exonuclease_C_sf"/>
</dbReference>
<dbReference type="InterPro" id="IPR020045">
    <property type="entry name" value="DNA_polI_H3TH"/>
</dbReference>
<dbReference type="InterPro" id="IPR038969">
    <property type="entry name" value="FEN"/>
</dbReference>
<dbReference type="InterPro" id="IPR008918">
    <property type="entry name" value="HhH2"/>
</dbReference>
<dbReference type="InterPro" id="IPR029060">
    <property type="entry name" value="PIN-like_dom_sf"/>
</dbReference>
<dbReference type="InterPro" id="IPR022895">
    <property type="entry name" value="Xni"/>
</dbReference>
<dbReference type="NCBIfam" id="NF007017">
    <property type="entry name" value="PRK09482.1"/>
    <property type="match status" value="1"/>
</dbReference>
<dbReference type="PANTHER" id="PTHR42646:SF2">
    <property type="entry name" value="5'-3' EXONUCLEASE FAMILY PROTEIN"/>
    <property type="match status" value="1"/>
</dbReference>
<dbReference type="PANTHER" id="PTHR42646">
    <property type="entry name" value="FLAP ENDONUCLEASE XNI"/>
    <property type="match status" value="1"/>
</dbReference>
<dbReference type="Pfam" id="PF01367">
    <property type="entry name" value="5_3_exonuc"/>
    <property type="match status" value="1"/>
</dbReference>
<dbReference type="Pfam" id="PF02739">
    <property type="entry name" value="5_3_exonuc_N"/>
    <property type="match status" value="1"/>
</dbReference>
<dbReference type="SMART" id="SM00475">
    <property type="entry name" value="53EXOc"/>
    <property type="match status" value="1"/>
</dbReference>
<dbReference type="SMART" id="SM00279">
    <property type="entry name" value="HhH2"/>
    <property type="match status" value="1"/>
</dbReference>
<dbReference type="SUPFAM" id="SSF47807">
    <property type="entry name" value="5' to 3' exonuclease, C-terminal subdomain"/>
    <property type="match status" value="1"/>
</dbReference>
<dbReference type="SUPFAM" id="SSF88723">
    <property type="entry name" value="PIN domain-like"/>
    <property type="match status" value="1"/>
</dbReference>
<reference key="1">
    <citation type="submission" date="2002-12" db="EMBL/GenBank/DDBJ databases">
        <title>Complete genome sequence of Vibrio vulnificus CMCP6.</title>
        <authorList>
            <person name="Rhee J.H."/>
            <person name="Kim S.Y."/>
            <person name="Chung S.S."/>
            <person name="Kim J.J."/>
            <person name="Moon Y.H."/>
            <person name="Jeong H."/>
            <person name="Choy H.E."/>
        </authorList>
    </citation>
    <scope>NUCLEOTIDE SEQUENCE [LARGE SCALE GENOMIC DNA]</scope>
    <source>
        <strain>CMCP6</strain>
    </source>
</reference>
<sequence>MAIHLVIIDALNLIRRVHSAQPDPTDIANTIQNTRRTLQRIISESHPTHIVAVFDHLGSDRGWRAEILPEYKQGRKPMPEPLLNGLEKIQEAWWQLGIDSLLSEGDEADDLVATLACKVAQHGEKVTIISTDKGYCQLLSPTLQIRDYFQHRWLDQPFIEQEFGVKPQQLSDYWGLTGISSSQVTGIPGIGPKAAKEILSQFDDIEQAFLSPDLPKKYRTKFDQHIELARRCKRVSALKTDIELGFNLQDLRFTANEAR</sequence>
<accession>Q8DFB4</accession>
<keyword id="KW-0238">DNA-binding</keyword>
<keyword id="KW-0255">Endonuclease</keyword>
<keyword id="KW-0378">Hydrolase</keyword>
<keyword id="KW-0460">Magnesium</keyword>
<keyword id="KW-0479">Metal-binding</keyword>
<keyword id="KW-0540">Nuclease</keyword>
<keyword id="KW-0630">Potassium</keyword>
<proteinExistence type="inferred from homology"/>
<comment type="function">
    <text evidence="1">Has flap endonuclease activity. During DNA replication, flap endonucleases cleave the 5'-overhanging flap structure that is generated by displacement synthesis when DNA polymerase encounters the 5'-end of a downstream Okazaki fragment.</text>
</comment>
<comment type="cofactor">
    <cofactor evidence="1">
        <name>Mg(2+)</name>
        <dbReference type="ChEBI" id="CHEBI:18420"/>
    </cofactor>
    <text evidence="1">Binds 2 Mg(2+) per subunit. Only one magnesium ion has a direct interaction with the protein, the other interactions are indirect.</text>
</comment>
<comment type="cofactor">
    <cofactor evidence="1">
        <name>K(+)</name>
        <dbReference type="ChEBI" id="CHEBI:29103"/>
    </cofactor>
    <text evidence="1">Binds 1 K(+) per subunit. The potassium ion strongly increases the affinity for DNA.</text>
</comment>
<comment type="similarity">
    <text evidence="1">Belongs to the Xni family.</text>
</comment>
<name>XNI_VIBVU</name>
<gene>
    <name evidence="1" type="primary">xni</name>
    <name evidence="1" type="synonym">ygdG</name>
    <name type="ordered locus">VV1_0301</name>
</gene>
<feature type="chain" id="PRO_0000297890" description="Flap endonuclease Xni">
    <location>
        <begin position="1"/>
        <end position="259"/>
    </location>
</feature>
<feature type="domain" description="5'-3' exonuclease" evidence="1">
    <location>
        <begin position="165"/>
        <end position="255"/>
    </location>
</feature>
<feature type="region of interest" description="Interaction with DNA" evidence="1">
    <location>
        <begin position="189"/>
        <end position="194"/>
    </location>
</feature>
<feature type="binding site" evidence="1">
    <location>
        <position position="109"/>
    </location>
    <ligand>
        <name>Mg(2+)</name>
        <dbReference type="ChEBI" id="CHEBI:18420"/>
    </ligand>
</feature>
<feature type="binding site" evidence="1">
    <location>
        <position position="176"/>
    </location>
    <ligand>
        <name>K(+)</name>
        <dbReference type="ChEBI" id="CHEBI:29103"/>
    </ligand>
</feature>
<feature type="binding site" evidence="1">
    <location>
        <position position="187"/>
    </location>
    <ligand>
        <name>K(+)</name>
        <dbReference type="ChEBI" id="CHEBI:29103"/>
    </ligand>
</feature>
<feature type="binding site" evidence="1">
    <location>
        <position position="190"/>
    </location>
    <ligand>
        <name>K(+)</name>
        <dbReference type="ChEBI" id="CHEBI:29103"/>
    </ligand>
</feature>
<organism>
    <name type="scientific">Vibrio vulnificus (strain CMCP6)</name>
    <dbReference type="NCBI Taxonomy" id="216895"/>
    <lineage>
        <taxon>Bacteria</taxon>
        <taxon>Pseudomonadati</taxon>
        <taxon>Pseudomonadota</taxon>
        <taxon>Gammaproteobacteria</taxon>
        <taxon>Vibrionales</taxon>
        <taxon>Vibrionaceae</taxon>
        <taxon>Vibrio</taxon>
    </lineage>
</organism>